<name>COX3_CYACA</name>
<accession>P48873</accession>
<organism>
    <name type="scientific">Cyanidium caldarium</name>
    <name type="common">Red alga</name>
    <dbReference type="NCBI Taxonomy" id="2771"/>
    <lineage>
        <taxon>Eukaryota</taxon>
        <taxon>Rhodophyta</taxon>
        <taxon>Bangiophyceae</taxon>
        <taxon>Cyanidiales</taxon>
        <taxon>Cyanidiaceae</taxon>
        <taxon>Cyanidium</taxon>
    </lineage>
</organism>
<evidence type="ECO:0000250" key="1">
    <source>
        <dbReference type="UniProtKB" id="P00420"/>
    </source>
</evidence>
<evidence type="ECO:0000255" key="2"/>
<evidence type="ECO:0000305" key="3"/>
<geneLocation type="mitochondrion"/>
<comment type="function">
    <text evidence="1">Component of the cytochrome c oxidase, the last enzyme in the mitochondrial electron transport chain which drives oxidative phosphorylation. The respiratory chain contains 3 multisubunit complexes succinate dehydrogenase (complex II, CII), ubiquinol-cytochrome c oxidoreductase (cytochrome b-c1 complex, complex III, CIII) and cytochrome c oxidase (complex IV, CIV), that cooperate to transfer electrons derived from NADH and succinate to molecular oxygen, creating an electrochemical gradient over the inner membrane that drives transmembrane transport and the ATP synthase. Cytochrome c oxidase is the component of the respiratory chain that catalyzes the reduction of oxygen to water. Electrons originating from reduced cytochrome c in the intermembrane space (IMS) are transferred via the dinuclear copper A center (CU(A)) of subunit 2 and heme A of subunit 1 to the active site in subunit 1, a binuclear center (BNC) formed by heme A3 and copper B (CU(B)). The BNC reduces molecular oxygen to 2 water molecules using 4 electrons from cytochrome c in the IMS and 4 protons from the mitochondrial matrix.</text>
</comment>
<comment type="catalytic activity">
    <reaction evidence="1">
        <text>4 Fe(II)-[cytochrome c] + O2 + 8 H(+)(in) = 4 Fe(III)-[cytochrome c] + 2 H2O + 4 H(+)(out)</text>
        <dbReference type="Rhea" id="RHEA:11436"/>
        <dbReference type="Rhea" id="RHEA-COMP:10350"/>
        <dbReference type="Rhea" id="RHEA-COMP:14399"/>
        <dbReference type="ChEBI" id="CHEBI:15377"/>
        <dbReference type="ChEBI" id="CHEBI:15378"/>
        <dbReference type="ChEBI" id="CHEBI:15379"/>
        <dbReference type="ChEBI" id="CHEBI:29033"/>
        <dbReference type="ChEBI" id="CHEBI:29034"/>
        <dbReference type="EC" id="7.1.1.9"/>
    </reaction>
    <physiologicalReaction direction="left-to-right" evidence="1">
        <dbReference type="Rhea" id="RHEA:11437"/>
    </physiologicalReaction>
</comment>
<comment type="subunit">
    <text evidence="1">Component of the cytochrome c oxidase (complex IV, CIV), a multisubunit enzyme composed of a catalytic core of 3 subunits and several supernumerary subunits. The complex exists as a monomer or a dimer and forms supercomplexes (SCs) in the inner mitochondrial membrane with ubiquinol-cytochrome c oxidoreductase (cytochrome b-c1 complex, complex III, CIII).</text>
</comment>
<comment type="subcellular location">
    <subcellularLocation>
        <location evidence="1">Mitochondrion inner membrane</location>
        <topology evidence="1">Multi-pass membrane protein</topology>
    </subcellularLocation>
</comment>
<comment type="similarity">
    <text evidence="3">Belongs to the cytochrome c oxidase subunit 3 family.</text>
</comment>
<reference key="1">
    <citation type="thesis" date="1995" institute="Justus Liebig University / Frankfurt" country="Germany">
        <authorList>
            <person name="Viehmann S."/>
        </authorList>
    </citation>
    <scope>NUCLEOTIDE SEQUENCE [GENOMIC DNA]</scope>
    <source>
        <strain>RK-1</strain>
    </source>
</reference>
<feature type="chain" id="PRO_0000183761" description="Cytochrome c oxidase subunit 3">
    <location>
        <begin position="1"/>
        <end position="270"/>
    </location>
</feature>
<feature type="transmembrane region" description="Helical" evidence="2">
    <location>
        <begin position="21"/>
        <end position="41"/>
    </location>
</feature>
<feature type="transmembrane region" description="Helical" evidence="2">
    <location>
        <begin position="46"/>
        <end position="66"/>
    </location>
</feature>
<feature type="transmembrane region" description="Helical" evidence="2">
    <location>
        <begin position="90"/>
        <end position="110"/>
    </location>
</feature>
<feature type="transmembrane region" description="Helical" evidence="2">
    <location>
        <begin position="131"/>
        <end position="151"/>
    </location>
</feature>
<feature type="transmembrane region" description="Helical" evidence="2">
    <location>
        <begin position="167"/>
        <end position="187"/>
    </location>
</feature>
<feature type="transmembrane region" description="Helical" evidence="2">
    <location>
        <begin position="205"/>
        <end position="225"/>
    </location>
</feature>
<feature type="transmembrane region" description="Helical" evidence="2">
    <location>
        <begin position="248"/>
        <end position="268"/>
    </location>
</feature>
<protein>
    <recommendedName>
        <fullName>Cytochrome c oxidase subunit 3</fullName>
        <ecNumber>7.1.1.9</ecNumber>
    </recommendedName>
    <alternativeName>
        <fullName>Cytochrome c oxidase polypeptide III</fullName>
    </alternativeName>
</protein>
<sequence>MMSLIVKDLQRYPFHLVDPSPWPFVASFSALIILLGGVLYFHTYQGSLVILFFGIFFLLLIIFVWWRDVVRESTFEGNHTTMVQLGMRYGIMLFIFSEVILFIAFFWAFFHNSLIPALETGVVWPPKGIQFFSPWDIPFLNTIILLLSGCAVTWSHNCIISGFRRQAIFSLILTIGLALIFTIFQIYEYAIASFHLSDGAYGSTFFMITGLHGFHVIVGTFFLFVCMFRLVQYHFTMQHHYGFEAATWYWHFVDVVWLFLFVSIYWWGSF</sequence>
<keyword id="KW-0472">Membrane</keyword>
<keyword id="KW-0496">Mitochondrion</keyword>
<keyword id="KW-0999">Mitochondrion inner membrane</keyword>
<keyword id="KW-1278">Translocase</keyword>
<keyword id="KW-0812">Transmembrane</keyword>
<keyword id="KW-1133">Transmembrane helix</keyword>
<gene>
    <name type="primary">COX3</name>
    <name type="synonym">COXIII</name>
</gene>
<dbReference type="EC" id="7.1.1.9"/>
<dbReference type="EMBL" id="Z48930">
    <property type="protein sequence ID" value="CAA88770.1"/>
    <property type="molecule type" value="Genomic_DNA"/>
</dbReference>
<dbReference type="PIR" id="S62760">
    <property type="entry name" value="S62760"/>
</dbReference>
<dbReference type="SMR" id="P48873"/>
<dbReference type="GO" id="GO:0005743">
    <property type="term" value="C:mitochondrial inner membrane"/>
    <property type="evidence" value="ECO:0007669"/>
    <property type="project" value="UniProtKB-SubCell"/>
</dbReference>
<dbReference type="GO" id="GO:0004129">
    <property type="term" value="F:cytochrome-c oxidase activity"/>
    <property type="evidence" value="ECO:0007669"/>
    <property type="project" value="UniProtKB-EC"/>
</dbReference>
<dbReference type="GO" id="GO:0006123">
    <property type="term" value="P:mitochondrial electron transport, cytochrome c to oxygen"/>
    <property type="evidence" value="ECO:0007669"/>
    <property type="project" value="TreeGrafter"/>
</dbReference>
<dbReference type="CDD" id="cd01665">
    <property type="entry name" value="Cyt_c_Oxidase_III"/>
    <property type="match status" value="1"/>
</dbReference>
<dbReference type="FunFam" id="1.10.287.70:FF:000082">
    <property type="entry name" value="Cytochrome c oxidase subunit 3"/>
    <property type="match status" value="1"/>
</dbReference>
<dbReference type="FunFam" id="1.20.120.80:FF:000002">
    <property type="entry name" value="Cytochrome c oxidase subunit 3"/>
    <property type="match status" value="1"/>
</dbReference>
<dbReference type="Gene3D" id="1.10.287.70">
    <property type="match status" value="1"/>
</dbReference>
<dbReference type="Gene3D" id="1.20.120.80">
    <property type="entry name" value="Cytochrome c oxidase, subunit III, four-helix bundle"/>
    <property type="match status" value="1"/>
</dbReference>
<dbReference type="InterPro" id="IPR024791">
    <property type="entry name" value="Cyt_c/ubiquinol_Oxase_su3"/>
</dbReference>
<dbReference type="InterPro" id="IPR033945">
    <property type="entry name" value="Cyt_c_oxase_su3_dom"/>
</dbReference>
<dbReference type="InterPro" id="IPR000298">
    <property type="entry name" value="Cyt_c_oxidase-like_su3"/>
</dbReference>
<dbReference type="InterPro" id="IPR035973">
    <property type="entry name" value="Cyt_c_oxidase_su3-like_sf"/>
</dbReference>
<dbReference type="InterPro" id="IPR013833">
    <property type="entry name" value="Cyt_c_oxidase_su3_a-hlx"/>
</dbReference>
<dbReference type="PANTHER" id="PTHR11403:SF7">
    <property type="entry name" value="CYTOCHROME C OXIDASE SUBUNIT 3"/>
    <property type="match status" value="1"/>
</dbReference>
<dbReference type="PANTHER" id="PTHR11403">
    <property type="entry name" value="CYTOCHROME C OXIDASE SUBUNIT III"/>
    <property type="match status" value="1"/>
</dbReference>
<dbReference type="Pfam" id="PF00510">
    <property type="entry name" value="COX3"/>
    <property type="match status" value="1"/>
</dbReference>
<dbReference type="SUPFAM" id="SSF81452">
    <property type="entry name" value="Cytochrome c oxidase subunit III-like"/>
    <property type="match status" value="1"/>
</dbReference>
<dbReference type="PROSITE" id="PS50253">
    <property type="entry name" value="COX3"/>
    <property type="match status" value="1"/>
</dbReference>
<proteinExistence type="inferred from homology"/>